<comment type="function">
    <text evidence="1">Beta toxins bind voltage-independently at site-4 of sodium channels (Nav) and shift the voltage of activation toward more negative potentials thereby affecting sodium channel activation and promoting spontaneous and repetitive firing.</text>
</comment>
<comment type="subcellular location">
    <subcellularLocation>
        <location>Secreted</location>
    </subcellularLocation>
</comment>
<comment type="tissue specificity">
    <text>Expressed by the venom gland.</text>
</comment>
<comment type="domain">
    <text evidence="4">Has the structural arrangement of an alpha-helix connected to antiparallel beta-sheets by disulfide bonds (CS-alpha/beta).</text>
</comment>
<comment type="similarity">
    <text evidence="4">Belongs to the long (4 C-C) scorpion toxin superfamily. Sodium channel inhibitor family. Beta subfamily.</text>
</comment>
<reference key="1">
    <citation type="journal article" date="2001" name="Toxicon">
        <title>Genes and peptides from the scorpion Centruroides sculpturatus Ewing, that recognize Na(+)-channels.</title>
        <authorList>
            <person name="Corona M."/>
            <person name="Valdez-Cruz N.A."/>
            <person name="Merino E."/>
            <person name="Zurita M."/>
            <person name="Possani L.D."/>
        </authorList>
    </citation>
    <scope>NUCLEOTIDE SEQUENCE [MRNA]</scope>
    <source>
        <tissue>Venom gland</tissue>
    </source>
</reference>
<keyword id="KW-0027">Amidation</keyword>
<keyword id="KW-1015">Disulfide bond</keyword>
<keyword id="KW-0872">Ion channel impairing toxin</keyword>
<keyword id="KW-0528">Neurotoxin</keyword>
<keyword id="KW-0964">Secreted</keyword>
<keyword id="KW-0732">Signal</keyword>
<keyword id="KW-0800">Toxin</keyword>
<keyword id="KW-0738">Voltage-gated sodium channel impairing toxin</keyword>
<accession>Q95WD1</accession>
<name>SCX8_CENSC</name>
<feature type="signal peptide" evidence="1">
    <location>
        <begin position="1"/>
        <end position="19"/>
    </location>
</feature>
<feature type="peptide" id="PRO_0000035291" description="Toxin CsE8">
    <location>
        <begin position="20"/>
        <end position="82"/>
    </location>
</feature>
<feature type="domain" description="LCN-type CS-alpha/beta" evidence="3">
    <location>
        <begin position="20"/>
        <end position="83"/>
    </location>
</feature>
<feature type="modified residue" description="Cysteine amide" evidence="2">
    <location>
        <position position="82"/>
    </location>
</feature>
<feature type="disulfide bond" evidence="3">
    <location>
        <begin position="31"/>
        <end position="82"/>
    </location>
</feature>
<feature type="disulfide bond" evidence="3">
    <location>
        <begin position="35"/>
        <end position="58"/>
    </location>
</feature>
<feature type="disulfide bond" evidence="3">
    <location>
        <begin position="44"/>
        <end position="63"/>
    </location>
</feature>
<feature type="disulfide bond" evidence="3">
    <location>
        <begin position="48"/>
        <end position="65"/>
    </location>
</feature>
<sequence>MNSLLMITACLVLFGTVWSEKGYLVHEDTGCRYKCTFSGENSYCDKECKSQGGDSGICQSKACYCQGLPEDTKTWPLIGKLCGRK</sequence>
<protein>
    <recommendedName>
        <fullName>Toxin CsE8</fullName>
    </recommendedName>
    <alternativeName>
        <fullName>Neurotoxin 8</fullName>
    </alternativeName>
</protein>
<evidence type="ECO:0000250" key="1"/>
<evidence type="ECO:0000255" key="2"/>
<evidence type="ECO:0000255" key="3">
    <source>
        <dbReference type="PROSITE-ProRule" id="PRU01210"/>
    </source>
</evidence>
<evidence type="ECO:0000305" key="4"/>
<proteinExistence type="evidence at transcript level"/>
<dbReference type="EMBL" id="AF338450">
    <property type="protein sequence ID" value="AAL23418.1"/>
    <property type="molecule type" value="mRNA"/>
</dbReference>
<dbReference type="SMR" id="Q95WD1"/>
<dbReference type="GO" id="GO:0005576">
    <property type="term" value="C:extracellular region"/>
    <property type="evidence" value="ECO:0007669"/>
    <property type="project" value="UniProtKB-SubCell"/>
</dbReference>
<dbReference type="GO" id="GO:0019871">
    <property type="term" value="F:sodium channel inhibitor activity"/>
    <property type="evidence" value="ECO:0007669"/>
    <property type="project" value="InterPro"/>
</dbReference>
<dbReference type="GO" id="GO:0090729">
    <property type="term" value="F:toxin activity"/>
    <property type="evidence" value="ECO:0007669"/>
    <property type="project" value="UniProtKB-KW"/>
</dbReference>
<dbReference type="GO" id="GO:0006952">
    <property type="term" value="P:defense response"/>
    <property type="evidence" value="ECO:0007669"/>
    <property type="project" value="InterPro"/>
</dbReference>
<dbReference type="CDD" id="cd23106">
    <property type="entry name" value="neurotoxins_LC_scorpion"/>
    <property type="match status" value="1"/>
</dbReference>
<dbReference type="Gene3D" id="3.30.30.10">
    <property type="entry name" value="Knottin, scorpion toxin-like"/>
    <property type="match status" value="1"/>
</dbReference>
<dbReference type="InterPro" id="IPR044062">
    <property type="entry name" value="LCN-type_CS_alpha_beta_dom"/>
</dbReference>
<dbReference type="InterPro" id="IPR003614">
    <property type="entry name" value="Scorpion_toxin-like"/>
</dbReference>
<dbReference type="InterPro" id="IPR036574">
    <property type="entry name" value="Scorpion_toxin-like_sf"/>
</dbReference>
<dbReference type="InterPro" id="IPR018218">
    <property type="entry name" value="Scorpion_toxinL"/>
</dbReference>
<dbReference type="InterPro" id="IPR002061">
    <property type="entry name" value="Scorpion_toxinL/defensin"/>
</dbReference>
<dbReference type="Pfam" id="PF00537">
    <property type="entry name" value="Toxin_3"/>
    <property type="match status" value="1"/>
</dbReference>
<dbReference type="PRINTS" id="PR00285">
    <property type="entry name" value="SCORPNTOXIN"/>
</dbReference>
<dbReference type="SMART" id="SM00505">
    <property type="entry name" value="Knot1"/>
    <property type="match status" value="1"/>
</dbReference>
<dbReference type="SUPFAM" id="SSF57095">
    <property type="entry name" value="Scorpion toxin-like"/>
    <property type="match status" value="1"/>
</dbReference>
<dbReference type="PROSITE" id="PS51863">
    <property type="entry name" value="LCN_CSAB"/>
    <property type="match status" value="1"/>
</dbReference>
<organism>
    <name type="scientific">Centruroides sculpturatus</name>
    <name type="common">Arizona bark scorpion</name>
    <dbReference type="NCBI Taxonomy" id="218467"/>
    <lineage>
        <taxon>Eukaryota</taxon>
        <taxon>Metazoa</taxon>
        <taxon>Ecdysozoa</taxon>
        <taxon>Arthropoda</taxon>
        <taxon>Chelicerata</taxon>
        <taxon>Arachnida</taxon>
        <taxon>Scorpiones</taxon>
        <taxon>Buthida</taxon>
        <taxon>Buthoidea</taxon>
        <taxon>Buthidae</taxon>
        <taxon>Centruroides</taxon>
    </lineage>
</organism>